<feature type="signal peptide" evidence="1">
    <location>
        <begin position="1"/>
        <end position="18"/>
    </location>
</feature>
<feature type="chain" id="PRO_5004170728" description="MFS-type transporter ATEG_00331">
    <location>
        <begin position="19"/>
        <end position="551"/>
    </location>
</feature>
<feature type="transmembrane region" description="Helical" evidence="1">
    <location>
        <begin position="40"/>
        <end position="60"/>
    </location>
</feature>
<feature type="transmembrane region" description="Helical" evidence="1">
    <location>
        <begin position="71"/>
        <end position="91"/>
    </location>
</feature>
<feature type="transmembrane region" description="Helical" evidence="1">
    <location>
        <begin position="102"/>
        <end position="122"/>
    </location>
</feature>
<feature type="transmembrane region" description="Helical" evidence="1">
    <location>
        <begin position="132"/>
        <end position="152"/>
    </location>
</feature>
<feature type="transmembrane region" description="Helical" evidence="1">
    <location>
        <begin position="179"/>
        <end position="199"/>
    </location>
</feature>
<feature type="transmembrane region" description="Helical" evidence="1">
    <location>
        <begin position="206"/>
        <end position="228"/>
    </location>
</feature>
<feature type="transmembrane region" description="Helical" evidence="1">
    <location>
        <begin position="233"/>
        <end position="255"/>
    </location>
</feature>
<feature type="transmembrane region" description="Helical" evidence="1">
    <location>
        <begin position="324"/>
        <end position="344"/>
    </location>
</feature>
<feature type="transmembrane region" description="Helical" evidence="1">
    <location>
        <begin position="354"/>
        <end position="374"/>
    </location>
</feature>
<feature type="transmembrane region" description="Helical" evidence="1">
    <location>
        <begin position="380"/>
        <end position="400"/>
    </location>
</feature>
<feature type="transmembrane region" description="Helical" evidence="1">
    <location>
        <begin position="417"/>
        <end position="437"/>
    </location>
</feature>
<feature type="transmembrane region" description="Helical" evidence="1">
    <location>
        <begin position="493"/>
        <end position="513"/>
    </location>
</feature>
<feature type="glycosylation site" description="N-linked (GlcNAc...) asparagine" evidence="2">
    <location>
        <position position="165"/>
    </location>
</feature>
<feature type="glycosylation site" description="N-linked (GlcNAc...) asparagine" evidence="2">
    <location>
        <position position="178"/>
    </location>
</feature>
<feature type="glycosylation site" description="N-linked (GlcNAc...) asparagine" evidence="2">
    <location>
        <position position="524"/>
    </location>
</feature>
<proteinExistence type="evidence at transcript level"/>
<name>AT331_ASPTN</name>
<dbReference type="EMBL" id="CH476594">
    <property type="protein sequence ID" value="EAU38977.1"/>
    <property type="molecule type" value="Genomic_DNA"/>
</dbReference>
<dbReference type="RefSeq" id="XP_001210417.1">
    <property type="nucleotide sequence ID" value="XM_001210417.1"/>
</dbReference>
<dbReference type="SMR" id="Q0D153"/>
<dbReference type="STRING" id="341663.Q0D153"/>
<dbReference type="EnsemblFungi" id="EAU38977">
    <property type="protein sequence ID" value="EAU38977"/>
    <property type="gene ID" value="ATEG_00331"/>
</dbReference>
<dbReference type="GeneID" id="4355083"/>
<dbReference type="VEuPathDB" id="FungiDB:ATEG_00331"/>
<dbReference type="eggNOG" id="KOG0254">
    <property type="taxonomic scope" value="Eukaryota"/>
</dbReference>
<dbReference type="HOGENOM" id="CLU_000960_22_0_1"/>
<dbReference type="OrthoDB" id="3934656at2759"/>
<dbReference type="Proteomes" id="UP000007963">
    <property type="component" value="Unassembled WGS sequence"/>
</dbReference>
<dbReference type="GO" id="GO:0005886">
    <property type="term" value="C:plasma membrane"/>
    <property type="evidence" value="ECO:0007669"/>
    <property type="project" value="TreeGrafter"/>
</dbReference>
<dbReference type="GO" id="GO:0022857">
    <property type="term" value="F:transmembrane transporter activity"/>
    <property type="evidence" value="ECO:0007669"/>
    <property type="project" value="InterPro"/>
</dbReference>
<dbReference type="Gene3D" id="1.20.1720.10">
    <property type="entry name" value="Multidrug resistance protein D"/>
    <property type="match status" value="1"/>
</dbReference>
<dbReference type="InterPro" id="IPR011701">
    <property type="entry name" value="MFS"/>
</dbReference>
<dbReference type="InterPro" id="IPR020846">
    <property type="entry name" value="MFS_dom"/>
</dbReference>
<dbReference type="InterPro" id="IPR036259">
    <property type="entry name" value="MFS_trans_sf"/>
</dbReference>
<dbReference type="PANTHER" id="PTHR23501:SF102">
    <property type="entry name" value="DRUG TRANSPORTER, PUTATIVE (AFU_ORTHOLOGUE AFUA_3G08530)-RELATED"/>
    <property type="match status" value="1"/>
</dbReference>
<dbReference type="PANTHER" id="PTHR23501">
    <property type="entry name" value="MAJOR FACILITATOR SUPERFAMILY"/>
    <property type="match status" value="1"/>
</dbReference>
<dbReference type="Pfam" id="PF07690">
    <property type="entry name" value="MFS_1"/>
    <property type="match status" value="1"/>
</dbReference>
<dbReference type="PRINTS" id="PR01036">
    <property type="entry name" value="TCRTETB"/>
</dbReference>
<dbReference type="SUPFAM" id="SSF103473">
    <property type="entry name" value="MFS general substrate transporter"/>
    <property type="match status" value="2"/>
</dbReference>
<dbReference type="PROSITE" id="PS50850">
    <property type="entry name" value="MFS"/>
    <property type="match status" value="1"/>
</dbReference>
<keyword id="KW-0325">Glycoprotein</keyword>
<keyword id="KW-0472">Membrane</keyword>
<keyword id="KW-1185">Reference proteome</keyword>
<keyword id="KW-0732">Signal</keyword>
<keyword id="KW-0812">Transmembrane</keyword>
<keyword id="KW-1133">Transmembrane helix</keyword>
<keyword id="KW-0813">Transport</keyword>
<evidence type="ECO:0000255" key="1"/>
<evidence type="ECO:0000255" key="2">
    <source>
        <dbReference type="PROSITE-ProRule" id="PRU00498"/>
    </source>
</evidence>
<evidence type="ECO:0000269" key="3">
    <source>
    </source>
</evidence>
<evidence type="ECO:0000303" key="4">
    <source>
    </source>
</evidence>
<evidence type="ECO:0000305" key="5"/>
<comment type="function">
    <text>MFS-type transporter; part of the gene cluster that mediates the biosynthesis of isoflavipucine (PubMed:21236704).</text>
</comment>
<comment type="subcellular location">
    <subcellularLocation>
        <location evidence="1">Membrane</location>
        <topology evidence="1">Multi-pass membrane protein</topology>
    </subcellularLocation>
</comment>
<comment type="induction">
    <text evidence="3">Expression is positively controlled by the cluster-specific regulator ATEG_00326 (PubMed:21236704).</text>
</comment>
<comment type="similarity">
    <text evidence="5">Belongs to the major facilitator superfamily. TCR/Tet family.</text>
</comment>
<gene>
    <name type="ORF">ATEG_00331</name>
</gene>
<reference key="1">
    <citation type="submission" date="2005-09" db="EMBL/GenBank/DDBJ databases">
        <title>Annotation of the Aspergillus terreus NIH2624 genome.</title>
        <authorList>
            <person name="Birren B.W."/>
            <person name="Lander E.S."/>
            <person name="Galagan J.E."/>
            <person name="Nusbaum C."/>
            <person name="Devon K."/>
            <person name="Henn M."/>
            <person name="Ma L.-J."/>
            <person name="Jaffe D.B."/>
            <person name="Butler J."/>
            <person name="Alvarez P."/>
            <person name="Gnerre S."/>
            <person name="Grabherr M."/>
            <person name="Kleber M."/>
            <person name="Mauceli E.W."/>
            <person name="Brockman W."/>
            <person name="Rounsley S."/>
            <person name="Young S.K."/>
            <person name="LaButti K."/>
            <person name="Pushparaj V."/>
            <person name="DeCaprio D."/>
            <person name="Crawford M."/>
            <person name="Koehrsen M."/>
            <person name="Engels R."/>
            <person name="Montgomery P."/>
            <person name="Pearson M."/>
            <person name="Howarth C."/>
            <person name="Larson L."/>
            <person name="Luoma S."/>
            <person name="White J."/>
            <person name="Alvarado L."/>
            <person name="Kodira C.D."/>
            <person name="Zeng Q."/>
            <person name="Oleary S."/>
            <person name="Yandava C."/>
            <person name="Denning D.W."/>
            <person name="Nierman W.C."/>
            <person name="Milne T."/>
            <person name="Madden K."/>
        </authorList>
    </citation>
    <scope>NUCLEOTIDE SEQUENCE [LARGE SCALE GENOMIC DNA]</scope>
    <source>
        <strain>NIH 2624 / FGSC A1156</strain>
    </source>
</reference>
<reference key="2">
    <citation type="journal article" date="2011" name="Chem. Biol.">
        <title>Multifactorial induction of an orphan PKS-NRPS gene cluster in Aspergillus terreus.</title>
        <authorList>
            <person name="Gressler M."/>
            <person name="Zaehle C."/>
            <person name="Scherlach K."/>
            <person name="Hertweck C."/>
            <person name="Brock M."/>
        </authorList>
    </citation>
    <scope>IDENTIFICATION IN THE ISOFLAVIPUCINE CLUSTER</scope>
    <scope>FUNCTION</scope>
    <scope>INDUCTION</scope>
</reference>
<protein>
    <recommendedName>
        <fullName evidence="5">MFS-type transporter ATEG_00331</fullName>
    </recommendedName>
    <alternativeName>
        <fullName evidence="4">Isoflavipucine biosynthesis cluster protein ATEG_00331</fullName>
    </alternativeName>
</protein>
<accession>Q0D153</accession>
<sequence>MKAWLLVSSLCLSTFIAALEQTIISTAAESISRSLHTTELEFTWIGTAYLLPAAASTPPWGKLSDIFGRKPVLMISIVVFFIGSLIGALAINIDMLIAGRVIQGTGGGGILGLSATVIGDVFSPRERSKYYGVLGVTWGVACGLGPIVGGAFCQYVSWRWCFWINRTSLPQSSPNPLNLTTSVPVAGVAGALVLLFLEVHTPRTPIIEGLLAMDWLGTITIVGATVMFLLGLGYGGIAYPWNSATVVCLIVFGIGDNRRLRPDRMEGRQVLDHAAAPVQIPPPISPPSASAYIHGLRLHRPTLYYPPAVLSRSCSAPPRSLSGVYLLPVAVTLCVASTATGLYISHSGRYRPPIYFGLVMMILGHGLYINLQPYASWARIIIFQIIAGLGLGPLFQAPIIAIFSLTKPADTASAAATVFFARDIATAMSIVFGGVIFQNRIRAFKSDIEGVVSPELTELITSGGATTASDQIRALPAAARSLVRDRYNTALRSEWIFYTALSGAALLLSVFISKQVLSRDHKMNKTGLDVQEASRLEELEKEKKAAATDAV</sequence>
<organism>
    <name type="scientific">Aspergillus terreus (strain NIH 2624 / FGSC A1156)</name>
    <dbReference type="NCBI Taxonomy" id="341663"/>
    <lineage>
        <taxon>Eukaryota</taxon>
        <taxon>Fungi</taxon>
        <taxon>Dikarya</taxon>
        <taxon>Ascomycota</taxon>
        <taxon>Pezizomycotina</taxon>
        <taxon>Eurotiomycetes</taxon>
        <taxon>Eurotiomycetidae</taxon>
        <taxon>Eurotiales</taxon>
        <taxon>Aspergillaceae</taxon>
        <taxon>Aspergillus</taxon>
        <taxon>Aspergillus subgen. Circumdati</taxon>
    </lineage>
</organism>